<proteinExistence type="inferred from homology"/>
<comment type="function">
    <text evidence="1">One of several proteins that assist in the late maturation steps of the functional core of the 30S ribosomal subunit. Associates with free 30S ribosomal subunits (but not with 30S subunits that are part of 70S ribosomes or polysomes). Required for efficient processing of 16S rRNA. May interact with the 5'-terminal helix region of 16S rRNA.</text>
</comment>
<comment type="subunit">
    <text evidence="1">Monomer. Binds 30S ribosomal subunits, but not 50S ribosomal subunits or 70S ribosomes.</text>
</comment>
<comment type="subcellular location">
    <subcellularLocation>
        <location evidence="1">Cytoplasm</location>
    </subcellularLocation>
</comment>
<comment type="similarity">
    <text evidence="1">Belongs to the RbfA family.</text>
</comment>
<reference key="1">
    <citation type="journal article" date="2007" name="PLoS Genet.">
        <title>Patterns and implications of gene gain and loss in the evolution of Prochlorococcus.</title>
        <authorList>
            <person name="Kettler G.C."/>
            <person name="Martiny A.C."/>
            <person name="Huang K."/>
            <person name="Zucker J."/>
            <person name="Coleman M.L."/>
            <person name="Rodrigue S."/>
            <person name="Chen F."/>
            <person name="Lapidus A."/>
            <person name="Ferriera S."/>
            <person name="Johnson J."/>
            <person name="Steglich C."/>
            <person name="Church G.M."/>
            <person name="Richardson P."/>
            <person name="Chisholm S.W."/>
        </authorList>
    </citation>
    <scope>NUCLEOTIDE SEQUENCE [LARGE SCALE GENOMIC DNA]</scope>
    <source>
        <strain>MIT 9303</strain>
    </source>
</reference>
<name>RBFA_PROM3</name>
<accession>A2CCY5</accession>
<gene>
    <name evidence="1" type="primary">rbfA</name>
    <name type="ordered locus">P9303_26151</name>
</gene>
<dbReference type="EMBL" id="CP000554">
    <property type="protein sequence ID" value="ABM79345.1"/>
    <property type="molecule type" value="Genomic_DNA"/>
</dbReference>
<dbReference type="RefSeq" id="WP_011827189.1">
    <property type="nucleotide sequence ID" value="NC_008820.1"/>
</dbReference>
<dbReference type="SMR" id="A2CCY5"/>
<dbReference type="STRING" id="59922.P9303_26151"/>
<dbReference type="KEGG" id="pmf:P9303_26151"/>
<dbReference type="HOGENOM" id="CLU_089475_2_1_3"/>
<dbReference type="BioCyc" id="PMAR59922:G1G80-2290-MONOMER"/>
<dbReference type="Proteomes" id="UP000002274">
    <property type="component" value="Chromosome"/>
</dbReference>
<dbReference type="GO" id="GO:0005829">
    <property type="term" value="C:cytosol"/>
    <property type="evidence" value="ECO:0007669"/>
    <property type="project" value="TreeGrafter"/>
</dbReference>
<dbReference type="GO" id="GO:0043024">
    <property type="term" value="F:ribosomal small subunit binding"/>
    <property type="evidence" value="ECO:0007669"/>
    <property type="project" value="TreeGrafter"/>
</dbReference>
<dbReference type="GO" id="GO:0030490">
    <property type="term" value="P:maturation of SSU-rRNA"/>
    <property type="evidence" value="ECO:0007669"/>
    <property type="project" value="UniProtKB-UniRule"/>
</dbReference>
<dbReference type="Gene3D" id="3.30.300.20">
    <property type="match status" value="1"/>
</dbReference>
<dbReference type="HAMAP" id="MF_00003">
    <property type="entry name" value="RbfA"/>
    <property type="match status" value="1"/>
</dbReference>
<dbReference type="InterPro" id="IPR015946">
    <property type="entry name" value="KH_dom-like_a/b"/>
</dbReference>
<dbReference type="InterPro" id="IPR000238">
    <property type="entry name" value="RbfA"/>
</dbReference>
<dbReference type="InterPro" id="IPR023799">
    <property type="entry name" value="RbfA_dom_sf"/>
</dbReference>
<dbReference type="InterPro" id="IPR020053">
    <property type="entry name" value="Ribosome-bd_factorA_CS"/>
</dbReference>
<dbReference type="NCBIfam" id="TIGR00082">
    <property type="entry name" value="rbfA"/>
    <property type="match status" value="1"/>
</dbReference>
<dbReference type="PANTHER" id="PTHR33515">
    <property type="entry name" value="RIBOSOME-BINDING FACTOR A, CHLOROPLASTIC-RELATED"/>
    <property type="match status" value="1"/>
</dbReference>
<dbReference type="PANTHER" id="PTHR33515:SF1">
    <property type="entry name" value="RIBOSOME-BINDING FACTOR A, CHLOROPLASTIC-RELATED"/>
    <property type="match status" value="1"/>
</dbReference>
<dbReference type="Pfam" id="PF02033">
    <property type="entry name" value="RBFA"/>
    <property type="match status" value="1"/>
</dbReference>
<dbReference type="SUPFAM" id="SSF89919">
    <property type="entry name" value="Ribosome-binding factor A, RbfA"/>
    <property type="match status" value="1"/>
</dbReference>
<dbReference type="PROSITE" id="PS01319">
    <property type="entry name" value="RBFA"/>
    <property type="match status" value="1"/>
</dbReference>
<protein>
    <recommendedName>
        <fullName evidence="1">Ribosome-binding factor A</fullName>
    </recommendedName>
</protein>
<evidence type="ECO:0000255" key="1">
    <source>
        <dbReference type="HAMAP-Rule" id="MF_00003"/>
    </source>
</evidence>
<evidence type="ECO:0000256" key="2">
    <source>
        <dbReference type="SAM" id="MobiDB-lite"/>
    </source>
</evidence>
<keyword id="KW-0963">Cytoplasm</keyword>
<keyword id="KW-0690">Ribosome biogenesis</keyword>
<sequence length="142" mass="16046">MAPGRRVERVAALIRRETSELLIHGIRDERVHQGMVSITNVEVSGDLQHCKIFVSIYGEEIQRSEVLEGLEAASGFLRGELGRRLQMRRAPEVHFHLDRGIEKGTSVLNLLEQLEQQRETLGEVQSESDQPTTDETTTVNKT</sequence>
<feature type="chain" id="PRO_1000000166" description="Ribosome-binding factor A">
    <location>
        <begin position="1"/>
        <end position="142"/>
    </location>
</feature>
<feature type="region of interest" description="Disordered" evidence="2">
    <location>
        <begin position="119"/>
        <end position="142"/>
    </location>
</feature>
<feature type="compositionally biased region" description="Polar residues" evidence="2">
    <location>
        <begin position="123"/>
        <end position="142"/>
    </location>
</feature>
<organism>
    <name type="scientific">Prochlorococcus marinus (strain MIT 9303)</name>
    <dbReference type="NCBI Taxonomy" id="59922"/>
    <lineage>
        <taxon>Bacteria</taxon>
        <taxon>Bacillati</taxon>
        <taxon>Cyanobacteriota</taxon>
        <taxon>Cyanophyceae</taxon>
        <taxon>Synechococcales</taxon>
        <taxon>Prochlorococcaceae</taxon>
        <taxon>Prochlorococcus</taxon>
    </lineage>
</organism>